<sequence>MSAELIAVYKDEQIIDLESAKVLGLSDGIKALKGTEPIYFDDSPLALEVIRHSCAHLLAQSLKALYPDAKFFVGPVVEEGFYYDFKTTSKISEEDLPKIEAKMKEFAKSKLAITKETLTREQALERFKGDELKHAVMSKISGDIFGVYQQGEFEDLCKGPHLPNTRFLNHFKLTKLAGAYLGGDENNEMLIRIYGIAFATKEGLKDYLFQIEEAKKRDHRKLGVELGLFSFDDEIGAGLPLWLPKGARLRKRIEDLLSQALLLRGYEPVKGPEILKSDVWKISGHYDNYKENMYFTTIDEQEYGIKPMNCVGHIKVYQSALHSYRDLPLRFYEYGVVHRHEKSGVLHGLLRVREFTQDDAHIFCSFEQIQSEVSAILDFTHKIMQAFGFSYEMELSTRPAKSIGDDKVWEKATNALKEALKEHRIDYKIDEGGGAFYGPKIDIKITDALKRKWQCGTIQVDMNLPERFKLAFTNEYNHAEQPVMIHRAILGSFERFIAILSEHFGGNFPFFVAPTQIALIPINEEHHVFALKLKEALKKCDIFVEVLDKNDSLNKKVRLAEKQKIPMILVLGNEEVETEILSIRDREKQAQYKMPLKEFLNMVESKMQEVSF</sequence>
<protein>
    <recommendedName>
        <fullName evidence="1">Threonine--tRNA ligase</fullName>
        <ecNumber evidence="1">6.1.1.3</ecNumber>
    </recommendedName>
    <alternativeName>
        <fullName evidence="1">Threonyl-tRNA synthetase</fullName>
        <shortName evidence="1">ThrRS</shortName>
    </alternativeName>
</protein>
<keyword id="KW-0030">Aminoacyl-tRNA synthetase</keyword>
<keyword id="KW-0067">ATP-binding</keyword>
<keyword id="KW-0963">Cytoplasm</keyword>
<keyword id="KW-0436">Ligase</keyword>
<keyword id="KW-0479">Metal-binding</keyword>
<keyword id="KW-0547">Nucleotide-binding</keyword>
<keyword id="KW-0648">Protein biosynthesis</keyword>
<keyword id="KW-0694">RNA-binding</keyword>
<keyword id="KW-0820">tRNA-binding</keyword>
<keyword id="KW-0862">Zinc</keyword>
<evidence type="ECO:0000255" key="1">
    <source>
        <dbReference type="HAMAP-Rule" id="MF_00184"/>
    </source>
</evidence>
<name>SYT_HELPJ</name>
<gene>
    <name evidence="1" type="primary">thrS</name>
    <name type="ordered locus">jhp_0113</name>
</gene>
<reference key="1">
    <citation type="journal article" date="1999" name="Nature">
        <title>Genomic sequence comparison of two unrelated isolates of the human gastric pathogen Helicobacter pylori.</title>
        <authorList>
            <person name="Alm R.A."/>
            <person name="Ling L.-S.L."/>
            <person name="Moir D.T."/>
            <person name="King B.L."/>
            <person name="Brown E.D."/>
            <person name="Doig P.C."/>
            <person name="Smith D.R."/>
            <person name="Noonan B."/>
            <person name="Guild B.C."/>
            <person name="deJonge B.L."/>
            <person name="Carmel G."/>
            <person name="Tummino P.J."/>
            <person name="Caruso A."/>
            <person name="Uria-Nickelsen M."/>
            <person name="Mills D.M."/>
            <person name="Ives C."/>
            <person name="Gibson R."/>
            <person name="Merberg D."/>
            <person name="Mills S.D."/>
            <person name="Jiang Q."/>
            <person name="Taylor D.E."/>
            <person name="Vovis G.F."/>
            <person name="Trust T.J."/>
        </authorList>
    </citation>
    <scope>NUCLEOTIDE SEQUENCE [LARGE SCALE GENOMIC DNA]</scope>
    <source>
        <strain>J99 / ATCC 700824</strain>
    </source>
</reference>
<dbReference type="EC" id="6.1.1.3" evidence="1"/>
<dbReference type="EMBL" id="AE001439">
    <property type="protein sequence ID" value="AAD05692.1"/>
    <property type="molecule type" value="Genomic_DNA"/>
</dbReference>
<dbReference type="PIR" id="G71972">
    <property type="entry name" value="G71972"/>
</dbReference>
<dbReference type="RefSeq" id="WP_001271832.1">
    <property type="nucleotide sequence ID" value="NC_000921.1"/>
</dbReference>
<dbReference type="SMR" id="Q9ZMV3"/>
<dbReference type="KEGG" id="hpj:jhp_0113"/>
<dbReference type="PATRIC" id="fig|85963.30.peg.915"/>
<dbReference type="eggNOG" id="COG0441">
    <property type="taxonomic scope" value="Bacteria"/>
</dbReference>
<dbReference type="Proteomes" id="UP000000804">
    <property type="component" value="Chromosome"/>
</dbReference>
<dbReference type="GO" id="GO:0005829">
    <property type="term" value="C:cytosol"/>
    <property type="evidence" value="ECO:0007669"/>
    <property type="project" value="TreeGrafter"/>
</dbReference>
<dbReference type="GO" id="GO:0005524">
    <property type="term" value="F:ATP binding"/>
    <property type="evidence" value="ECO:0007669"/>
    <property type="project" value="UniProtKB-UniRule"/>
</dbReference>
<dbReference type="GO" id="GO:0046872">
    <property type="term" value="F:metal ion binding"/>
    <property type="evidence" value="ECO:0007669"/>
    <property type="project" value="UniProtKB-KW"/>
</dbReference>
<dbReference type="GO" id="GO:0004829">
    <property type="term" value="F:threonine-tRNA ligase activity"/>
    <property type="evidence" value="ECO:0007669"/>
    <property type="project" value="UniProtKB-UniRule"/>
</dbReference>
<dbReference type="GO" id="GO:0000049">
    <property type="term" value="F:tRNA binding"/>
    <property type="evidence" value="ECO:0007669"/>
    <property type="project" value="UniProtKB-KW"/>
</dbReference>
<dbReference type="GO" id="GO:0006435">
    <property type="term" value="P:threonyl-tRNA aminoacylation"/>
    <property type="evidence" value="ECO:0007669"/>
    <property type="project" value="UniProtKB-UniRule"/>
</dbReference>
<dbReference type="CDD" id="cd00860">
    <property type="entry name" value="ThrRS_anticodon"/>
    <property type="match status" value="1"/>
</dbReference>
<dbReference type="CDD" id="cd00771">
    <property type="entry name" value="ThrRS_core"/>
    <property type="match status" value="1"/>
</dbReference>
<dbReference type="FunFam" id="3.30.930.10:FF:000019">
    <property type="entry name" value="Threonine--tRNA ligase"/>
    <property type="match status" value="1"/>
</dbReference>
<dbReference type="FunFam" id="3.30.980.10:FF:000005">
    <property type="entry name" value="Threonyl-tRNA synthetase, mitochondrial"/>
    <property type="match status" value="1"/>
</dbReference>
<dbReference type="Gene3D" id="3.30.54.20">
    <property type="match status" value="1"/>
</dbReference>
<dbReference type="Gene3D" id="3.40.50.800">
    <property type="entry name" value="Anticodon-binding domain"/>
    <property type="match status" value="1"/>
</dbReference>
<dbReference type="Gene3D" id="3.30.930.10">
    <property type="entry name" value="Bira Bifunctional Protein, Domain 2"/>
    <property type="match status" value="1"/>
</dbReference>
<dbReference type="Gene3D" id="3.30.980.10">
    <property type="entry name" value="Threonyl-trna Synthetase, Chain A, domain 2"/>
    <property type="match status" value="1"/>
</dbReference>
<dbReference type="HAMAP" id="MF_00184">
    <property type="entry name" value="Thr_tRNA_synth"/>
    <property type="match status" value="1"/>
</dbReference>
<dbReference type="InterPro" id="IPR002314">
    <property type="entry name" value="aa-tRNA-synt_IIb"/>
</dbReference>
<dbReference type="InterPro" id="IPR006195">
    <property type="entry name" value="aa-tRNA-synth_II"/>
</dbReference>
<dbReference type="InterPro" id="IPR045864">
    <property type="entry name" value="aa-tRNA-synth_II/BPL/LPL"/>
</dbReference>
<dbReference type="InterPro" id="IPR004154">
    <property type="entry name" value="Anticodon-bd"/>
</dbReference>
<dbReference type="InterPro" id="IPR036621">
    <property type="entry name" value="Anticodon-bd_dom_sf"/>
</dbReference>
<dbReference type="InterPro" id="IPR002320">
    <property type="entry name" value="Thr-tRNA-ligase_IIa"/>
</dbReference>
<dbReference type="InterPro" id="IPR018163">
    <property type="entry name" value="Thr/Ala-tRNA-synth_IIc_edit"/>
</dbReference>
<dbReference type="InterPro" id="IPR047246">
    <property type="entry name" value="ThrRS_anticodon"/>
</dbReference>
<dbReference type="InterPro" id="IPR033728">
    <property type="entry name" value="ThrRS_core"/>
</dbReference>
<dbReference type="InterPro" id="IPR012947">
    <property type="entry name" value="tRNA_SAD"/>
</dbReference>
<dbReference type="NCBIfam" id="TIGR00418">
    <property type="entry name" value="thrS"/>
    <property type="match status" value="1"/>
</dbReference>
<dbReference type="PANTHER" id="PTHR11451:SF44">
    <property type="entry name" value="THREONINE--TRNA LIGASE, CHLOROPLASTIC_MITOCHONDRIAL 2"/>
    <property type="match status" value="1"/>
</dbReference>
<dbReference type="PANTHER" id="PTHR11451">
    <property type="entry name" value="THREONINE-TRNA LIGASE"/>
    <property type="match status" value="1"/>
</dbReference>
<dbReference type="Pfam" id="PF03129">
    <property type="entry name" value="HGTP_anticodon"/>
    <property type="match status" value="1"/>
</dbReference>
<dbReference type="Pfam" id="PF00587">
    <property type="entry name" value="tRNA-synt_2b"/>
    <property type="match status" value="1"/>
</dbReference>
<dbReference type="Pfam" id="PF07973">
    <property type="entry name" value="tRNA_SAD"/>
    <property type="match status" value="1"/>
</dbReference>
<dbReference type="PRINTS" id="PR01047">
    <property type="entry name" value="TRNASYNTHTHR"/>
</dbReference>
<dbReference type="SMART" id="SM00863">
    <property type="entry name" value="tRNA_SAD"/>
    <property type="match status" value="1"/>
</dbReference>
<dbReference type="SUPFAM" id="SSF52954">
    <property type="entry name" value="Class II aaRS ABD-related"/>
    <property type="match status" value="1"/>
</dbReference>
<dbReference type="SUPFAM" id="SSF55681">
    <property type="entry name" value="Class II aaRS and biotin synthetases"/>
    <property type="match status" value="1"/>
</dbReference>
<dbReference type="SUPFAM" id="SSF55186">
    <property type="entry name" value="ThrRS/AlaRS common domain"/>
    <property type="match status" value="1"/>
</dbReference>
<dbReference type="PROSITE" id="PS50862">
    <property type="entry name" value="AA_TRNA_LIGASE_II"/>
    <property type="match status" value="1"/>
</dbReference>
<comment type="function">
    <text evidence="1">Catalyzes the attachment of threonine to tRNA(Thr) in a two-step reaction: L-threonine is first activated by ATP to form Thr-AMP and then transferred to the acceptor end of tRNA(Thr). Also edits incorrectly charged L-seryl-tRNA(Thr).</text>
</comment>
<comment type="catalytic activity">
    <reaction evidence="1">
        <text>tRNA(Thr) + L-threonine + ATP = L-threonyl-tRNA(Thr) + AMP + diphosphate + H(+)</text>
        <dbReference type="Rhea" id="RHEA:24624"/>
        <dbReference type="Rhea" id="RHEA-COMP:9670"/>
        <dbReference type="Rhea" id="RHEA-COMP:9704"/>
        <dbReference type="ChEBI" id="CHEBI:15378"/>
        <dbReference type="ChEBI" id="CHEBI:30616"/>
        <dbReference type="ChEBI" id="CHEBI:33019"/>
        <dbReference type="ChEBI" id="CHEBI:57926"/>
        <dbReference type="ChEBI" id="CHEBI:78442"/>
        <dbReference type="ChEBI" id="CHEBI:78534"/>
        <dbReference type="ChEBI" id="CHEBI:456215"/>
        <dbReference type="EC" id="6.1.1.3"/>
    </reaction>
</comment>
<comment type="cofactor">
    <cofactor evidence="1">
        <name>Zn(2+)</name>
        <dbReference type="ChEBI" id="CHEBI:29105"/>
    </cofactor>
    <text evidence="1">Binds 1 zinc ion per subunit.</text>
</comment>
<comment type="subunit">
    <text evidence="1">Homodimer.</text>
</comment>
<comment type="subcellular location">
    <subcellularLocation>
        <location evidence="1">Cytoplasm</location>
    </subcellularLocation>
</comment>
<comment type="similarity">
    <text evidence="1">Belongs to the class-II aminoacyl-tRNA synthetase family.</text>
</comment>
<organism>
    <name type="scientific">Helicobacter pylori (strain J99 / ATCC 700824)</name>
    <name type="common">Campylobacter pylori J99</name>
    <dbReference type="NCBI Taxonomy" id="85963"/>
    <lineage>
        <taxon>Bacteria</taxon>
        <taxon>Pseudomonadati</taxon>
        <taxon>Campylobacterota</taxon>
        <taxon>Epsilonproteobacteria</taxon>
        <taxon>Campylobacterales</taxon>
        <taxon>Helicobacteraceae</taxon>
        <taxon>Helicobacter</taxon>
    </lineage>
</organism>
<feature type="chain" id="PRO_0000100990" description="Threonine--tRNA ligase">
    <location>
        <begin position="1"/>
        <end position="612"/>
    </location>
</feature>
<feature type="region of interest" description="Catalytic" evidence="1">
    <location>
        <begin position="218"/>
        <end position="509"/>
    </location>
</feature>
<feature type="binding site" evidence="1">
    <location>
        <position position="310"/>
    </location>
    <ligand>
        <name>Zn(2+)</name>
        <dbReference type="ChEBI" id="CHEBI:29105"/>
    </ligand>
</feature>
<feature type="binding site" evidence="1">
    <location>
        <position position="361"/>
    </location>
    <ligand>
        <name>Zn(2+)</name>
        <dbReference type="ChEBI" id="CHEBI:29105"/>
    </ligand>
</feature>
<feature type="binding site" evidence="1">
    <location>
        <position position="486"/>
    </location>
    <ligand>
        <name>Zn(2+)</name>
        <dbReference type="ChEBI" id="CHEBI:29105"/>
    </ligand>
</feature>
<accession>Q9ZMV3</accession>
<proteinExistence type="inferred from homology"/>